<dbReference type="EMBL" id="AY029206">
    <property type="protein sequence ID" value="AAK31582.1"/>
    <property type="molecule type" value="mRNA"/>
</dbReference>
<dbReference type="EMBL" id="AB011110">
    <property type="protein sequence ID" value="BAA25464.2"/>
    <property type="status" value="ALT_INIT"/>
    <property type="molecule type" value="mRNA"/>
</dbReference>
<dbReference type="EMBL" id="AK026441">
    <property type="status" value="NOT_ANNOTATED_CDS"/>
    <property type="molecule type" value="mRNA"/>
</dbReference>
<dbReference type="EMBL" id="AC004084">
    <property type="protein sequence ID" value="AAB97935.2"/>
    <property type="status" value="ALT_SEQ"/>
    <property type="molecule type" value="Genomic_DNA"/>
</dbReference>
<dbReference type="EMBL" id="AC093668">
    <property type="status" value="NOT_ANNOTATED_CDS"/>
    <property type="molecule type" value="Genomic_DNA"/>
</dbReference>
<dbReference type="EMBL" id="AC105052">
    <property type="protein sequence ID" value="AAP22345.1"/>
    <property type="status" value="ALT_SEQ"/>
    <property type="molecule type" value="Genomic_DNA"/>
</dbReference>
<dbReference type="EMBL" id="BC113663">
    <property type="protein sequence ID" value="AAI13664.1"/>
    <property type="molecule type" value="mRNA"/>
</dbReference>
<dbReference type="CCDS" id="CCDS47674.1">
    <molecule id="O43374-2"/>
</dbReference>
<dbReference type="CCDS" id="CCDS5725.1">
    <molecule id="O43374-1"/>
</dbReference>
<dbReference type="RefSeq" id="NP_001073346.2">
    <molecule id="O43374-2"/>
    <property type="nucleotide sequence ID" value="NM_001079877.2"/>
</dbReference>
<dbReference type="RefSeq" id="NP_008920.5">
    <molecule id="O43374-1"/>
    <property type="nucleotide sequence ID" value="NM_006989.5"/>
</dbReference>
<dbReference type="SMR" id="O43374"/>
<dbReference type="BioGRID" id="115458">
    <property type="interactions" value="5"/>
</dbReference>
<dbReference type="FunCoup" id="O43374">
    <property type="interactions" value="372"/>
</dbReference>
<dbReference type="IntAct" id="O43374">
    <property type="interactions" value="7"/>
</dbReference>
<dbReference type="MINT" id="O43374"/>
<dbReference type="STRING" id="9606.ENSP00000262940"/>
<dbReference type="iPTMnet" id="O43374"/>
<dbReference type="PhosphoSitePlus" id="O43374"/>
<dbReference type="BioMuta" id="RASA4"/>
<dbReference type="jPOST" id="O43374"/>
<dbReference type="MassIVE" id="O43374"/>
<dbReference type="PaxDb" id="9606-ENSP00000262940"/>
<dbReference type="PeptideAtlas" id="O43374"/>
<dbReference type="ProteomicsDB" id="48913">
    <molecule id="O43374-1"/>
</dbReference>
<dbReference type="ProteomicsDB" id="48914">
    <molecule id="O43374-2"/>
</dbReference>
<dbReference type="Pumba" id="O43374"/>
<dbReference type="Antibodypedia" id="31113">
    <property type="antibodies" value="97 antibodies from 23 providers"/>
</dbReference>
<dbReference type="DNASU" id="10156"/>
<dbReference type="Ensembl" id="ENST00000262940.12">
    <molecule id="O43374-1"/>
    <property type="protein sequence ID" value="ENSP00000262940.8"/>
    <property type="gene ID" value="ENSG00000105808.19"/>
</dbReference>
<dbReference type="Ensembl" id="ENST00000449970.6">
    <molecule id="O43374-2"/>
    <property type="protein sequence ID" value="ENSP00000412876.2"/>
    <property type="gene ID" value="ENSG00000105808.19"/>
</dbReference>
<dbReference type="GeneID" id="10156"/>
<dbReference type="KEGG" id="hsa:10156"/>
<dbReference type="MANE-Select" id="ENST00000262940.12">
    <property type="protein sequence ID" value="ENSP00000262940.8"/>
    <property type="RefSeq nucleotide sequence ID" value="NM_006989.6"/>
    <property type="RefSeq protein sequence ID" value="NP_008920.5"/>
</dbReference>
<dbReference type="UCSC" id="uc003vae.4">
    <molecule id="O43374-1"/>
    <property type="organism name" value="human"/>
</dbReference>
<dbReference type="AGR" id="HGNC:23181"/>
<dbReference type="CTD" id="10156"/>
<dbReference type="DisGeNET" id="10156"/>
<dbReference type="GeneCards" id="RASA4"/>
<dbReference type="HGNC" id="HGNC:23181">
    <property type="gene designation" value="RASA4"/>
</dbReference>
<dbReference type="HPA" id="ENSG00000105808">
    <property type="expression patterns" value="Group enriched (skeletal muscle, tongue)"/>
</dbReference>
<dbReference type="MIM" id="607943">
    <property type="type" value="gene"/>
</dbReference>
<dbReference type="neXtProt" id="NX_O43374"/>
<dbReference type="OpenTargets" id="ENSG00000105808"/>
<dbReference type="PharmGKB" id="PA134889495"/>
<dbReference type="VEuPathDB" id="HostDB:ENSG00000105808"/>
<dbReference type="eggNOG" id="KOG2059">
    <property type="taxonomic scope" value="Eukaryota"/>
</dbReference>
<dbReference type="GeneTree" id="ENSGT00940000160149"/>
<dbReference type="HOGENOM" id="CLU_008096_0_0_1"/>
<dbReference type="InParanoid" id="O43374"/>
<dbReference type="OMA" id="VGCDKTR"/>
<dbReference type="OrthoDB" id="1562946at2759"/>
<dbReference type="PAN-GO" id="O43374">
    <property type="GO annotations" value="0 GO annotations based on evolutionary models"/>
</dbReference>
<dbReference type="PhylomeDB" id="O43374"/>
<dbReference type="TreeFam" id="TF105302"/>
<dbReference type="PathwayCommons" id="O43374"/>
<dbReference type="Reactome" id="R-HSA-5658442">
    <property type="pathway name" value="Regulation of RAS by GAPs"/>
</dbReference>
<dbReference type="SignaLink" id="O43374"/>
<dbReference type="BioGRID-ORCS" id="10156">
    <property type="hits" value="212 hits in 1035 CRISPR screens"/>
</dbReference>
<dbReference type="ChiTaRS" id="RASA4">
    <property type="organism name" value="human"/>
</dbReference>
<dbReference type="GeneWiki" id="RASA4"/>
<dbReference type="GenomeRNAi" id="10156"/>
<dbReference type="Pharos" id="O43374">
    <property type="development level" value="Tbio"/>
</dbReference>
<dbReference type="PRO" id="PR:O43374"/>
<dbReference type="Proteomes" id="UP000005640">
    <property type="component" value="Chromosome 7"/>
</dbReference>
<dbReference type="RNAct" id="O43374">
    <property type="molecule type" value="protein"/>
</dbReference>
<dbReference type="Bgee" id="ENSG00000105808">
    <property type="expression patterns" value="Expressed in hindlimb stylopod muscle and 99 other cell types or tissues"/>
</dbReference>
<dbReference type="ExpressionAtlas" id="O43374">
    <property type="expression patterns" value="baseline and differential"/>
</dbReference>
<dbReference type="GO" id="GO:0005829">
    <property type="term" value="C:cytosol"/>
    <property type="evidence" value="ECO:0000314"/>
    <property type="project" value="UniProtKB"/>
</dbReference>
<dbReference type="GO" id="GO:0005886">
    <property type="term" value="C:plasma membrane"/>
    <property type="evidence" value="ECO:0007669"/>
    <property type="project" value="UniProtKB-SubCell"/>
</dbReference>
<dbReference type="GO" id="GO:0005096">
    <property type="term" value="F:GTPase activator activity"/>
    <property type="evidence" value="ECO:0000314"/>
    <property type="project" value="UniProtKB"/>
</dbReference>
<dbReference type="GO" id="GO:0005543">
    <property type="term" value="F:phospholipid binding"/>
    <property type="evidence" value="ECO:0007669"/>
    <property type="project" value="InterPro"/>
</dbReference>
<dbReference type="GO" id="GO:0008270">
    <property type="term" value="F:zinc ion binding"/>
    <property type="evidence" value="ECO:0007669"/>
    <property type="project" value="UniProtKB-KW"/>
</dbReference>
<dbReference type="GO" id="GO:0071277">
    <property type="term" value="P:cellular response to calcium ion"/>
    <property type="evidence" value="ECO:0000315"/>
    <property type="project" value="UniProtKB"/>
</dbReference>
<dbReference type="GO" id="GO:0035556">
    <property type="term" value="P:intracellular signal transduction"/>
    <property type="evidence" value="ECO:0007669"/>
    <property type="project" value="InterPro"/>
</dbReference>
<dbReference type="GO" id="GO:0034260">
    <property type="term" value="P:negative regulation of GTPase activity"/>
    <property type="evidence" value="ECO:0000314"/>
    <property type="project" value="CACAO"/>
</dbReference>
<dbReference type="GO" id="GO:0046580">
    <property type="term" value="P:negative regulation of Ras protein signal transduction"/>
    <property type="evidence" value="ECO:0007669"/>
    <property type="project" value="InterPro"/>
</dbReference>
<dbReference type="CDD" id="cd04054">
    <property type="entry name" value="C2A_Rasal1_RasA4"/>
    <property type="match status" value="1"/>
</dbReference>
<dbReference type="CDD" id="cd04025">
    <property type="entry name" value="C2B_RasA1_RasA4"/>
    <property type="match status" value="1"/>
</dbReference>
<dbReference type="CDD" id="cd13372">
    <property type="entry name" value="PH_CAPRI"/>
    <property type="match status" value="1"/>
</dbReference>
<dbReference type="CDD" id="cd05395">
    <property type="entry name" value="RasGAP_RASA4"/>
    <property type="match status" value="1"/>
</dbReference>
<dbReference type="FunFam" id="1.10.506.10:FF:000020">
    <property type="entry name" value="Ras GTPase-activating protein 4 isoform 1"/>
    <property type="match status" value="1"/>
</dbReference>
<dbReference type="FunFam" id="2.30.29.30:FF:000283">
    <property type="entry name" value="Ras GTPase-activating protein 4 isoform 1"/>
    <property type="match status" value="1"/>
</dbReference>
<dbReference type="FunFam" id="2.60.40.150:FF:000069">
    <property type="entry name" value="Ras GTPase-activating protein 4 isoform 1"/>
    <property type="match status" value="1"/>
</dbReference>
<dbReference type="FunFam" id="2.60.40.150:FF:000150">
    <property type="entry name" value="RAS protein activator like 1"/>
    <property type="match status" value="1"/>
</dbReference>
<dbReference type="Gene3D" id="2.60.40.150">
    <property type="entry name" value="C2 domain"/>
    <property type="match status" value="2"/>
</dbReference>
<dbReference type="Gene3D" id="1.10.506.10">
    <property type="entry name" value="GTPase Activation - p120gap, domain 1"/>
    <property type="match status" value="1"/>
</dbReference>
<dbReference type="Gene3D" id="2.30.29.30">
    <property type="entry name" value="Pleckstrin-homology domain (PH domain)/Phosphotyrosine-binding domain (PTB)"/>
    <property type="match status" value="1"/>
</dbReference>
<dbReference type="InterPro" id="IPR000008">
    <property type="entry name" value="C2_dom"/>
</dbReference>
<dbReference type="InterPro" id="IPR035892">
    <property type="entry name" value="C2_domain_sf"/>
</dbReference>
<dbReference type="InterPro" id="IPR011993">
    <property type="entry name" value="PH-like_dom_sf"/>
</dbReference>
<dbReference type="InterPro" id="IPR001849">
    <property type="entry name" value="PH_domain"/>
</dbReference>
<dbReference type="InterPro" id="IPR039360">
    <property type="entry name" value="Ras_GTPase"/>
</dbReference>
<dbReference type="InterPro" id="IPR037777">
    <property type="entry name" value="RASA4_PH"/>
</dbReference>
<dbReference type="InterPro" id="IPR023152">
    <property type="entry name" value="RasGAP_CS"/>
</dbReference>
<dbReference type="InterPro" id="IPR001936">
    <property type="entry name" value="RasGAP_dom"/>
</dbReference>
<dbReference type="InterPro" id="IPR008936">
    <property type="entry name" value="Rho_GTPase_activation_prot"/>
</dbReference>
<dbReference type="InterPro" id="IPR001562">
    <property type="entry name" value="Znf_Btk_motif"/>
</dbReference>
<dbReference type="PANTHER" id="PTHR10194:SF4">
    <property type="entry name" value="RAS GTPASE-ACTIVATING PROTEIN 4-RELATED"/>
    <property type="match status" value="1"/>
</dbReference>
<dbReference type="PANTHER" id="PTHR10194">
    <property type="entry name" value="RAS GTPASE-ACTIVATING PROTEINS"/>
    <property type="match status" value="1"/>
</dbReference>
<dbReference type="Pfam" id="PF00779">
    <property type="entry name" value="BTK"/>
    <property type="match status" value="1"/>
</dbReference>
<dbReference type="Pfam" id="PF00168">
    <property type="entry name" value="C2"/>
    <property type="match status" value="2"/>
</dbReference>
<dbReference type="Pfam" id="PF00169">
    <property type="entry name" value="PH"/>
    <property type="match status" value="1"/>
</dbReference>
<dbReference type="Pfam" id="PF00616">
    <property type="entry name" value="RasGAP"/>
    <property type="match status" value="1"/>
</dbReference>
<dbReference type="PRINTS" id="PR00360">
    <property type="entry name" value="C2DOMAIN"/>
</dbReference>
<dbReference type="SMART" id="SM00107">
    <property type="entry name" value="BTK"/>
    <property type="match status" value="1"/>
</dbReference>
<dbReference type="SMART" id="SM00239">
    <property type="entry name" value="C2"/>
    <property type="match status" value="2"/>
</dbReference>
<dbReference type="SMART" id="SM00233">
    <property type="entry name" value="PH"/>
    <property type="match status" value="1"/>
</dbReference>
<dbReference type="SMART" id="SM00323">
    <property type="entry name" value="RasGAP"/>
    <property type="match status" value="1"/>
</dbReference>
<dbReference type="SUPFAM" id="SSF49562">
    <property type="entry name" value="C2 domain (Calcium/lipid-binding domain, CaLB)"/>
    <property type="match status" value="2"/>
</dbReference>
<dbReference type="SUPFAM" id="SSF48350">
    <property type="entry name" value="GTPase activation domain, GAP"/>
    <property type="match status" value="1"/>
</dbReference>
<dbReference type="SUPFAM" id="SSF50729">
    <property type="entry name" value="PH domain-like"/>
    <property type="match status" value="1"/>
</dbReference>
<dbReference type="PROSITE" id="PS50004">
    <property type="entry name" value="C2"/>
    <property type="match status" value="2"/>
</dbReference>
<dbReference type="PROSITE" id="PS50003">
    <property type="entry name" value="PH_DOMAIN"/>
    <property type="match status" value="1"/>
</dbReference>
<dbReference type="PROSITE" id="PS00509">
    <property type="entry name" value="RAS_GTPASE_ACTIV_1"/>
    <property type="match status" value="1"/>
</dbReference>
<dbReference type="PROSITE" id="PS50018">
    <property type="entry name" value="RAS_GTPASE_ACTIV_2"/>
    <property type="match status" value="1"/>
</dbReference>
<dbReference type="PROSITE" id="PS51113">
    <property type="entry name" value="ZF_BTK"/>
    <property type="match status" value="1"/>
</dbReference>
<name>RASL2_HUMAN</name>
<keyword id="KW-0025">Alternative splicing</keyword>
<keyword id="KW-0106">Calcium</keyword>
<keyword id="KW-1003">Cell membrane</keyword>
<keyword id="KW-0963">Cytoplasm</keyword>
<keyword id="KW-0343">GTPase activation</keyword>
<keyword id="KW-0472">Membrane</keyword>
<keyword id="KW-0479">Metal-binding</keyword>
<keyword id="KW-1267">Proteomics identification</keyword>
<keyword id="KW-1185">Reference proteome</keyword>
<keyword id="KW-0677">Repeat</keyword>
<keyword id="KW-0862">Zinc</keyword>
<keyword id="KW-0863">Zinc-finger</keyword>
<reference key="1">
    <citation type="journal article" date="2001" name="Curr. Biol.">
        <title>CAPRI regulates Ca(2+)-dependent inactivation of the Ras-MAPK pathway.</title>
        <authorList>
            <person name="Lockyer P.J."/>
            <person name="Kupzig S."/>
            <person name="Cullen P.J."/>
        </authorList>
    </citation>
    <scope>NUCLEOTIDE SEQUENCE [MRNA] (ISOFORM 1)</scope>
    <scope>VARIANT VAL-352</scope>
    <scope>FUNCTION</scope>
    <scope>SUBCELLULAR LOCATION</scope>
    <scope>TISSUE SPECIFICITY</scope>
    <source>
        <tissue>Blood</tissue>
    </source>
</reference>
<reference key="2">
    <citation type="journal article" date="1998" name="DNA Res.">
        <title>Prediction of the coding sequences of unidentified human genes. IX. The complete sequences of 100 new cDNA clones from brain which can code for large proteins in vitro.</title>
        <authorList>
            <person name="Nagase T."/>
            <person name="Ishikawa K."/>
            <person name="Miyajima N."/>
            <person name="Tanaka A."/>
            <person name="Kotani H."/>
            <person name="Nomura N."/>
            <person name="Ohara O."/>
        </authorList>
    </citation>
    <scope>NUCLEOTIDE SEQUENCE [LARGE SCALE MRNA] (ISOFORM 1)</scope>
    <source>
        <tissue>Brain</tissue>
    </source>
</reference>
<reference key="3">
    <citation type="journal article" date="2004" name="Nat. Genet.">
        <title>Complete sequencing and characterization of 21,243 full-length human cDNAs.</title>
        <authorList>
            <person name="Ota T."/>
            <person name="Suzuki Y."/>
            <person name="Nishikawa T."/>
            <person name="Otsuki T."/>
            <person name="Sugiyama T."/>
            <person name="Irie R."/>
            <person name="Wakamatsu A."/>
            <person name="Hayashi K."/>
            <person name="Sato H."/>
            <person name="Nagai K."/>
            <person name="Kimura K."/>
            <person name="Makita H."/>
            <person name="Sekine M."/>
            <person name="Obayashi M."/>
            <person name="Nishi T."/>
            <person name="Shibahara T."/>
            <person name="Tanaka T."/>
            <person name="Ishii S."/>
            <person name="Yamamoto J."/>
            <person name="Saito K."/>
            <person name="Kawai Y."/>
            <person name="Isono Y."/>
            <person name="Nakamura Y."/>
            <person name="Nagahari K."/>
            <person name="Murakami K."/>
            <person name="Yasuda T."/>
            <person name="Iwayanagi T."/>
            <person name="Wagatsuma M."/>
            <person name="Shiratori A."/>
            <person name="Sudo H."/>
            <person name="Hosoiri T."/>
            <person name="Kaku Y."/>
            <person name="Kodaira H."/>
            <person name="Kondo H."/>
            <person name="Sugawara M."/>
            <person name="Takahashi M."/>
            <person name="Kanda K."/>
            <person name="Yokoi T."/>
            <person name="Furuya T."/>
            <person name="Kikkawa E."/>
            <person name="Omura Y."/>
            <person name="Abe K."/>
            <person name="Kamihara K."/>
            <person name="Katsuta N."/>
            <person name="Sato K."/>
            <person name="Tanikawa M."/>
            <person name="Yamazaki M."/>
            <person name="Ninomiya K."/>
            <person name="Ishibashi T."/>
            <person name="Yamashita H."/>
            <person name="Murakawa K."/>
            <person name="Fujimori K."/>
            <person name="Tanai H."/>
            <person name="Kimata M."/>
            <person name="Watanabe M."/>
            <person name="Hiraoka S."/>
            <person name="Chiba Y."/>
            <person name="Ishida S."/>
            <person name="Ono Y."/>
            <person name="Takiguchi S."/>
            <person name="Watanabe S."/>
            <person name="Yosida M."/>
            <person name="Hotuta T."/>
            <person name="Kusano J."/>
            <person name="Kanehori K."/>
            <person name="Takahashi-Fujii A."/>
            <person name="Hara H."/>
            <person name="Tanase T.-O."/>
            <person name="Nomura Y."/>
            <person name="Togiya S."/>
            <person name="Komai F."/>
            <person name="Hara R."/>
            <person name="Takeuchi K."/>
            <person name="Arita M."/>
            <person name="Imose N."/>
            <person name="Musashino K."/>
            <person name="Yuuki H."/>
            <person name="Oshima A."/>
            <person name="Sasaki N."/>
            <person name="Aotsuka S."/>
            <person name="Yoshikawa Y."/>
            <person name="Matsunawa H."/>
            <person name="Ichihara T."/>
            <person name="Shiohata N."/>
            <person name="Sano S."/>
            <person name="Moriya S."/>
            <person name="Momiyama H."/>
            <person name="Satoh N."/>
            <person name="Takami S."/>
            <person name="Terashima Y."/>
            <person name="Suzuki O."/>
            <person name="Nakagawa S."/>
            <person name="Senoh A."/>
            <person name="Mizoguchi H."/>
            <person name="Goto Y."/>
            <person name="Shimizu F."/>
            <person name="Wakebe H."/>
            <person name="Hishigaki H."/>
            <person name="Watanabe T."/>
            <person name="Sugiyama A."/>
            <person name="Takemoto M."/>
            <person name="Kawakami B."/>
            <person name="Yamazaki M."/>
            <person name="Watanabe K."/>
            <person name="Kumagai A."/>
            <person name="Itakura S."/>
            <person name="Fukuzumi Y."/>
            <person name="Fujimori Y."/>
            <person name="Komiyama M."/>
            <person name="Tashiro H."/>
            <person name="Tanigami A."/>
            <person name="Fujiwara T."/>
            <person name="Ono T."/>
            <person name="Yamada K."/>
            <person name="Fujii Y."/>
            <person name="Ozaki K."/>
            <person name="Hirao M."/>
            <person name="Ohmori Y."/>
            <person name="Kawabata A."/>
            <person name="Hikiji T."/>
            <person name="Kobatake N."/>
            <person name="Inagaki H."/>
            <person name="Ikema Y."/>
            <person name="Okamoto S."/>
            <person name="Okitani R."/>
            <person name="Kawakami T."/>
            <person name="Noguchi S."/>
            <person name="Itoh T."/>
            <person name="Shigeta K."/>
            <person name="Senba T."/>
            <person name="Matsumura K."/>
            <person name="Nakajima Y."/>
            <person name="Mizuno T."/>
            <person name="Morinaga M."/>
            <person name="Sasaki M."/>
            <person name="Togashi T."/>
            <person name="Oyama M."/>
            <person name="Hata H."/>
            <person name="Watanabe M."/>
            <person name="Komatsu T."/>
            <person name="Mizushima-Sugano J."/>
            <person name="Satoh T."/>
            <person name="Shirai Y."/>
            <person name="Takahashi Y."/>
            <person name="Nakagawa K."/>
            <person name="Okumura K."/>
            <person name="Nagase T."/>
            <person name="Nomura N."/>
            <person name="Kikuchi H."/>
            <person name="Masuho Y."/>
            <person name="Yamashita R."/>
            <person name="Nakai K."/>
            <person name="Yada T."/>
            <person name="Nakamura Y."/>
            <person name="Ohara O."/>
            <person name="Isogai T."/>
            <person name="Sugano S."/>
        </authorList>
    </citation>
    <scope>NUCLEOTIDE SEQUENCE [LARGE SCALE MRNA] (ISOFORM 2)</scope>
</reference>
<reference key="4">
    <citation type="journal article" date="2003" name="Nature">
        <title>The DNA sequence of human chromosome 7.</title>
        <authorList>
            <person name="Hillier L.W."/>
            <person name="Fulton R.S."/>
            <person name="Fulton L.A."/>
            <person name="Graves T.A."/>
            <person name="Pepin K.H."/>
            <person name="Wagner-McPherson C."/>
            <person name="Layman D."/>
            <person name="Maas J."/>
            <person name="Jaeger S."/>
            <person name="Walker R."/>
            <person name="Wylie K."/>
            <person name="Sekhon M."/>
            <person name="Becker M.C."/>
            <person name="O'Laughlin M.D."/>
            <person name="Schaller M.E."/>
            <person name="Fewell G.A."/>
            <person name="Delehaunty K.D."/>
            <person name="Miner T.L."/>
            <person name="Nash W.E."/>
            <person name="Cordes M."/>
            <person name="Du H."/>
            <person name="Sun H."/>
            <person name="Edwards J."/>
            <person name="Bradshaw-Cordum H."/>
            <person name="Ali J."/>
            <person name="Andrews S."/>
            <person name="Isak A."/>
            <person name="Vanbrunt A."/>
            <person name="Nguyen C."/>
            <person name="Du F."/>
            <person name="Lamar B."/>
            <person name="Courtney L."/>
            <person name="Kalicki J."/>
            <person name="Ozersky P."/>
            <person name="Bielicki L."/>
            <person name="Scott K."/>
            <person name="Holmes A."/>
            <person name="Harkins R."/>
            <person name="Harris A."/>
            <person name="Strong C.M."/>
            <person name="Hou S."/>
            <person name="Tomlinson C."/>
            <person name="Dauphin-Kohlberg S."/>
            <person name="Kozlowicz-Reilly A."/>
            <person name="Leonard S."/>
            <person name="Rohlfing T."/>
            <person name="Rock S.M."/>
            <person name="Tin-Wollam A.-M."/>
            <person name="Abbott A."/>
            <person name="Minx P."/>
            <person name="Maupin R."/>
            <person name="Strowmatt C."/>
            <person name="Latreille P."/>
            <person name="Miller N."/>
            <person name="Johnson D."/>
            <person name="Murray J."/>
            <person name="Woessner J.P."/>
            <person name="Wendl M.C."/>
            <person name="Yang S.-P."/>
            <person name="Schultz B.R."/>
            <person name="Wallis J.W."/>
            <person name="Spieth J."/>
            <person name="Bieri T.A."/>
            <person name="Nelson J.O."/>
            <person name="Berkowicz N."/>
            <person name="Wohldmann P.E."/>
            <person name="Cook L.L."/>
            <person name="Hickenbotham M.T."/>
            <person name="Eldred J."/>
            <person name="Williams D."/>
            <person name="Bedell J.A."/>
            <person name="Mardis E.R."/>
            <person name="Clifton S.W."/>
            <person name="Chissoe S.L."/>
            <person name="Marra M.A."/>
            <person name="Raymond C."/>
            <person name="Haugen E."/>
            <person name="Gillett W."/>
            <person name="Zhou Y."/>
            <person name="James R."/>
            <person name="Phelps K."/>
            <person name="Iadanoto S."/>
            <person name="Bubb K."/>
            <person name="Simms E."/>
            <person name="Levy R."/>
            <person name="Clendenning J."/>
            <person name="Kaul R."/>
            <person name="Kent W.J."/>
            <person name="Furey T.S."/>
            <person name="Baertsch R.A."/>
            <person name="Brent M.R."/>
            <person name="Keibler E."/>
            <person name="Flicek P."/>
            <person name="Bork P."/>
            <person name="Suyama M."/>
            <person name="Bailey J.A."/>
            <person name="Portnoy M.E."/>
            <person name="Torrents D."/>
            <person name="Chinwalla A.T."/>
            <person name="Gish W.R."/>
            <person name="Eddy S.R."/>
            <person name="McPherson J.D."/>
            <person name="Olson M.V."/>
            <person name="Eichler E.E."/>
            <person name="Green E.D."/>
            <person name="Waterston R.H."/>
            <person name="Wilson R.K."/>
        </authorList>
    </citation>
    <scope>NUCLEOTIDE SEQUENCE [LARGE SCALE GENOMIC DNA]</scope>
</reference>
<reference key="5">
    <citation type="journal article" date="2004" name="Genome Res.">
        <title>The status, quality, and expansion of the NIH full-length cDNA project: the Mammalian Gene Collection (MGC).</title>
        <authorList>
            <consortium name="The MGC Project Team"/>
        </authorList>
    </citation>
    <scope>NUCLEOTIDE SEQUENCE [LARGE SCALE MRNA] (ISOFORM 1)</scope>
    <scope>VARIANT VAL-352</scope>
    <source>
        <tissue>Liver</tissue>
    </source>
</reference>
<evidence type="ECO:0000255" key="1">
    <source>
        <dbReference type="PROSITE-ProRule" id="PRU00041"/>
    </source>
</evidence>
<evidence type="ECO:0000255" key="2">
    <source>
        <dbReference type="PROSITE-ProRule" id="PRU00145"/>
    </source>
</evidence>
<evidence type="ECO:0000255" key="3">
    <source>
        <dbReference type="PROSITE-ProRule" id="PRU00167"/>
    </source>
</evidence>
<evidence type="ECO:0000255" key="4">
    <source>
        <dbReference type="PROSITE-ProRule" id="PRU00432"/>
    </source>
</evidence>
<evidence type="ECO:0000256" key="5">
    <source>
        <dbReference type="SAM" id="MobiDB-lite"/>
    </source>
</evidence>
<evidence type="ECO:0000269" key="6">
    <source>
    </source>
</evidence>
<evidence type="ECO:0000269" key="7">
    <source>
    </source>
</evidence>
<evidence type="ECO:0000303" key="8">
    <source>
    </source>
</evidence>
<evidence type="ECO:0000305" key="9"/>
<sequence>MAKRSSLYIRIVEGKNLPAKDITGSSDPYCIVKVDNEPIIRTATVWKTLCPFWGEEYQVHLPPTFHAVAFYVMDEDALSRDDVIGKVCLTRDTIASHPKGFSGWAHLTEVDPDEEVQGEIHLRLEVWPGARACRLRCSVLEARDLAPKDRNGTSDPFVRVRYKGRTRETSIVKKSCYPRWNETFEFELQEGAMEALCVEAWDWDLVSRNDFLGKVVIDVQRLRVVQQEEGWFRLQPDQSKSRRHDEGNLGSLQLEVRLRDETVLPSSYYQPLVHLLCHEVKLGMQGPGQLIPLIEETTSTECRQDVATNLLKLFLGQGLAKDFLDLLFQLELSRTSETNTLFRSNSLASKSMESFLKVAGMQYLHGVLGPIINKVFEEKKYVELDPSKVEVKDVGCSGLHRPQTEAEVLEQSAQTLRAHLGALLSALSRSVRACPAVVRATFRQLFRRVRERFPGAQHENVPFIAVTSFLCLRFFSPAIMSPKLFHLRERHADARTSRTLLLLAKAVQNVGNMDTPASRAKEAWMEPLQPTVRQGVAQLKDFITKLVDIEEKDELDLQRTLSLQAPPVKEGPLFIHRTKGKGPLMSSSFKKLYFSLTTEALSFAKTPSSKKSALIKLANIRAAEKVEEKSFGGSHVMQVIYTDDAGRPQTAYLQCKCVNELNQWLSALRKVSINNTGLLGSYHPGVFRGDKWSCCHQKEKTGQGCDKTRSRVTLQEWNDPLDHDLEAQLIYRHLLGVEAMLWERHRELSGGAEAGTVPTSPGKVPEDSLARLLRVLQDLREAHSSSPAGSPPSEPNCLLELQT</sequence>
<organism>
    <name type="scientific">Homo sapiens</name>
    <name type="common">Human</name>
    <dbReference type="NCBI Taxonomy" id="9606"/>
    <lineage>
        <taxon>Eukaryota</taxon>
        <taxon>Metazoa</taxon>
        <taxon>Chordata</taxon>
        <taxon>Craniata</taxon>
        <taxon>Vertebrata</taxon>
        <taxon>Euteleostomi</taxon>
        <taxon>Mammalia</taxon>
        <taxon>Eutheria</taxon>
        <taxon>Euarchontoglires</taxon>
        <taxon>Primates</taxon>
        <taxon>Haplorrhini</taxon>
        <taxon>Catarrhini</taxon>
        <taxon>Hominidae</taxon>
        <taxon>Homo</taxon>
    </lineage>
</organism>
<protein>
    <recommendedName>
        <fullName>Ras GTPase-activating protein 4</fullName>
    </recommendedName>
    <alternativeName>
        <fullName>Calcium-promoted Ras inactivator</fullName>
    </alternativeName>
    <alternativeName>
        <fullName>Ras p21 protein activator 4</fullName>
    </alternativeName>
    <alternativeName>
        <fullName>RasGAP-activating-like protein 2</fullName>
    </alternativeName>
</protein>
<comment type="function">
    <text evidence="6">Ca(2+)-dependent Ras GTPase-activating protein, that switches off the Ras-MAPK pathway following a stimulus that elevates intracellular calcium. Functions as an adaptor for Cdc42 and Rac1 during FcR-mediated phagocytosis.</text>
</comment>
<comment type="cofactor">
    <cofactor evidence="1">
        <name>Ca(2+)</name>
        <dbReference type="ChEBI" id="CHEBI:29108"/>
    </cofactor>
    <text evidence="1">Binds 3 Ca(2+) ions per C2 domain.</text>
</comment>
<comment type="subcellular location">
    <subcellularLocation>
        <location evidence="6">Cytoplasm</location>
        <location evidence="6">Cytosol</location>
    </subcellularLocation>
    <subcellularLocation>
        <location evidence="6">Cell membrane</location>
        <topology evidence="6">Peripheral membrane protein</topology>
    </subcellularLocation>
    <text>Localized to the cytosol as a result of its lack of phosphoinositide binding activity. Upon agonist-stimulated calcium mobilization, utilizes the C2A and C2B domains to associate with the plasma membrane.</text>
</comment>
<comment type="alternative products">
    <event type="alternative splicing"/>
    <isoform>
        <id>O43374-1</id>
        <name>1</name>
        <sequence type="displayed"/>
    </isoform>
    <isoform>
        <id>O43374-2</id>
        <name>2</name>
        <sequence type="described" ref="VSP_039965"/>
    </isoform>
</comment>
<comment type="tissue specificity">
    <text evidence="6">Widely expressed.</text>
</comment>
<comment type="domain">
    <text>The PH domain does not bind phosphatidylinositol 4,5-bisphosphate or phosphatidylinositol 3,4,5-trisphosphate. This lack of binding activity is due to Leu-592, compared to Arg found in other family members.</text>
</comment>
<comment type="sequence caution" evidence="9">
    <conflict type="erroneous gene model prediction">
        <sequence resource="EMBL-CDS" id="AAB97935"/>
    </conflict>
</comment>
<comment type="sequence caution" evidence="9">
    <conflict type="erroneous gene model prediction">
        <sequence resource="EMBL-CDS" id="AAP22345"/>
    </conflict>
</comment>
<comment type="sequence caution" evidence="9">
    <conflict type="erroneous initiation">
        <sequence resource="EMBL-CDS" id="BAA25464"/>
    </conflict>
    <text>Extended N-terminus.</text>
</comment>
<accession>O43374</accession>
<accession>O60286</accession>
<accession>Q14CQ4</accession>
<accession>Q86UW3</accession>
<accession>Q96QU0</accession>
<proteinExistence type="evidence at protein level"/>
<feature type="chain" id="PRO_0000056647" description="Ras GTPase-activating protein 4">
    <location>
        <begin position="1"/>
        <end position="803"/>
    </location>
</feature>
<feature type="domain" description="C2 1" evidence="1">
    <location>
        <begin position="1"/>
        <end position="105"/>
    </location>
</feature>
<feature type="domain" description="C2 2" evidence="1">
    <location>
        <begin position="116"/>
        <end position="232"/>
    </location>
</feature>
<feature type="domain" description="Ras-GAP" evidence="3">
    <location>
        <begin position="318"/>
        <end position="546"/>
    </location>
</feature>
<feature type="domain" description="PH" evidence="2">
    <location>
        <begin position="566"/>
        <end position="673"/>
    </location>
</feature>
<feature type="zinc finger region" description="Btk-type" evidence="4">
    <location>
        <begin position="675"/>
        <end position="711"/>
    </location>
</feature>
<feature type="region of interest" description="Disordered" evidence="5">
    <location>
        <begin position="781"/>
        <end position="803"/>
    </location>
</feature>
<feature type="binding site" evidence="1">
    <location>
        <position position="21"/>
    </location>
    <ligand>
        <name>Ca(2+)</name>
        <dbReference type="ChEBI" id="CHEBI:29108"/>
        <label>1</label>
    </ligand>
</feature>
<feature type="binding site" evidence="1">
    <location>
        <position position="21"/>
    </location>
    <ligand>
        <name>Ca(2+)</name>
        <dbReference type="ChEBI" id="CHEBI:29108"/>
        <label>2</label>
    </ligand>
</feature>
<feature type="binding site" evidence="1">
    <location>
        <position position="27"/>
    </location>
    <ligand>
        <name>Ca(2+)</name>
        <dbReference type="ChEBI" id="CHEBI:29108"/>
        <label>1</label>
    </ligand>
</feature>
<feature type="binding site" evidence="1">
    <location>
        <position position="74"/>
    </location>
    <ligand>
        <name>Ca(2+)</name>
        <dbReference type="ChEBI" id="CHEBI:29108"/>
        <label>1</label>
    </ligand>
</feature>
<feature type="binding site" evidence="1">
    <location>
        <position position="74"/>
    </location>
    <ligand>
        <name>Ca(2+)</name>
        <dbReference type="ChEBI" id="CHEBI:29108"/>
        <label>2</label>
    </ligand>
</feature>
<feature type="binding site" evidence="1">
    <location>
        <position position="76"/>
    </location>
    <ligand>
        <name>Ca(2+)</name>
        <dbReference type="ChEBI" id="CHEBI:29108"/>
        <label>1</label>
    </ligand>
</feature>
<feature type="binding site" evidence="1">
    <location>
        <position position="76"/>
    </location>
    <ligand>
        <name>Ca(2+)</name>
        <dbReference type="ChEBI" id="CHEBI:29108"/>
        <label>2</label>
    </ligand>
</feature>
<feature type="binding site" evidence="1">
    <location>
        <position position="76"/>
    </location>
    <ligand>
        <name>Ca(2+)</name>
        <dbReference type="ChEBI" id="CHEBI:29108"/>
        <label>3</label>
    </ligand>
</feature>
<feature type="binding site" evidence="1">
    <location>
        <position position="79"/>
    </location>
    <ligand>
        <name>Ca(2+)</name>
        <dbReference type="ChEBI" id="CHEBI:29108"/>
        <label>3</label>
    </ligand>
</feature>
<feature type="binding site" evidence="1">
    <location>
        <position position="82"/>
    </location>
    <ligand>
        <name>Ca(2+)</name>
        <dbReference type="ChEBI" id="CHEBI:29108"/>
        <label>2</label>
    </ligand>
</feature>
<feature type="binding site" evidence="1">
    <location>
        <position position="82"/>
    </location>
    <ligand>
        <name>Ca(2+)</name>
        <dbReference type="ChEBI" id="CHEBI:29108"/>
        <label>3</label>
    </ligand>
</feature>
<feature type="binding site" evidence="1">
    <location>
        <position position="149"/>
    </location>
    <ligand>
        <name>Ca(2+)</name>
        <dbReference type="ChEBI" id="CHEBI:29108"/>
        <label>4</label>
    </ligand>
</feature>
<feature type="binding site" evidence="1">
    <location>
        <position position="149"/>
    </location>
    <ligand>
        <name>Ca(2+)</name>
        <dbReference type="ChEBI" id="CHEBI:29108"/>
        <label>5</label>
    </ligand>
</feature>
<feature type="binding site" evidence="1">
    <location>
        <position position="155"/>
    </location>
    <ligand>
        <name>Ca(2+)</name>
        <dbReference type="ChEBI" id="CHEBI:29108"/>
        <label>4</label>
    </ligand>
</feature>
<feature type="binding site" evidence="1">
    <location>
        <position position="202"/>
    </location>
    <ligand>
        <name>Ca(2+)</name>
        <dbReference type="ChEBI" id="CHEBI:29108"/>
        <label>4</label>
    </ligand>
</feature>
<feature type="binding site" evidence="1">
    <location>
        <position position="202"/>
    </location>
    <ligand>
        <name>Ca(2+)</name>
        <dbReference type="ChEBI" id="CHEBI:29108"/>
        <label>5</label>
    </ligand>
</feature>
<feature type="binding site" evidence="1">
    <location>
        <position position="204"/>
    </location>
    <ligand>
        <name>Ca(2+)</name>
        <dbReference type="ChEBI" id="CHEBI:29108"/>
        <label>4</label>
    </ligand>
</feature>
<feature type="binding site" evidence="1">
    <location>
        <position position="204"/>
    </location>
    <ligand>
        <name>Ca(2+)</name>
        <dbReference type="ChEBI" id="CHEBI:29108"/>
        <label>5</label>
    </ligand>
</feature>
<feature type="binding site" evidence="1">
    <location>
        <position position="204"/>
    </location>
    <ligand>
        <name>Ca(2+)</name>
        <dbReference type="ChEBI" id="CHEBI:29108"/>
        <label>6</label>
    </ligand>
</feature>
<feature type="binding site" evidence="1">
    <location>
        <position position="207"/>
    </location>
    <ligand>
        <name>Ca(2+)</name>
        <dbReference type="ChEBI" id="CHEBI:29108"/>
        <label>6</label>
    </ligand>
</feature>
<feature type="binding site" evidence="1">
    <location>
        <position position="210"/>
    </location>
    <ligand>
        <name>Ca(2+)</name>
        <dbReference type="ChEBI" id="CHEBI:29108"/>
        <label>5</label>
    </ligand>
</feature>
<feature type="binding site" evidence="1">
    <location>
        <position position="210"/>
    </location>
    <ligand>
        <name>Ca(2+)</name>
        <dbReference type="ChEBI" id="CHEBI:29108"/>
        <label>6</label>
    </ligand>
</feature>
<feature type="binding site" evidence="4">
    <location>
        <position position="683"/>
    </location>
    <ligand>
        <name>Zn(2+)</name>
        <dbReference type="ChEBI" id="CHEBI:29105"/>
    </ligand>
</feature>
<feature type="binding site" evidence="4">
    <location>
        <position position="694"/>
    </location>
    <ligand>
        <name>Zn(2+)</name>
        <dbReference type="ChEBI" id="CHEBI:29105"/>
    </ligand>
</feature>
<feature type="binding site" evidence="4">
    <location>
        <position position="695"/>
    </location>
    <ligand>
        <name>Zn(2+)</name>
        <dbReference type="ChEBI" id="CHEBI:29105"/>
    </ligand>
</feature>
<feature type="binding site" evidence="4">
    <location>
        <position position="705"/>
    </location>
    <ligand>
        <name>Zn(2+)</name>
        <dbReference type="ChEBI" id="CHEBI:29105"/>
    </ligand>
</feature>
<feature type="site" description="Arginine finger; crucial for GTP hydrolysis by stabilizing the transition state" evidence="3">
    <location>
        <position position="343"/>
    </location>
</feature>
<feature type="splice variant" id="VSP_039965" description="In isoform 2." evidence="8">
    <location>
        <begin position="611"/>
        <end position="656"/>
    </location>
</feature>
<feature type="sequence variant" id="VAR_027680" description="In dbSNP:rs144395384." evidence="6 7">
    <original>M</original>
    <variation>V</variation>
    <location>
        <position position="352"/>
    </location>
</feature>
<feature type="sequence variant" id="VAR_027681" description="In dbSNP:rs886346.">
    <original>R</original>
    <variation>P</variation>
    <location>
        <position position="432"/>
    </location>
</feature>
<feature type="sequence conflict" description="In Ref. 3; AK026441." evidence="9" ref="3">
    <original>G</original>
    <variation>V</variation>
    <location>
        <position position="213"/>
    </location>
</feature>
<feature type="sequence conflict" description="In Ref. 3; AK026441." evidence="9" ref="3">
    <original>D</original>
    <variation>G</variation>
    <location>
        <position position="260"/>
    </location>
</feature>
<feature type="sequence conflict" description="In Ref. 3; AK026441." evidence="9" ref="3">
    <original>R</original>
    <variation>L</variation>
    <location>
        <position position="429"/>
    </location>
</feature>
<feature type="sequence conflict" description="In Ref. 3; AK026441." evidence="9" ref="3">
    <original>M</original>
    <variation>V</variation>
    <location>
        <position position="480"/>
    </location>
</feature>
<feature type="sequence conflict" description="In Ref. 2; BAA25464." evidence="9" ref="2">
    <original>T</original>
    <variation>M</variation>
    <location>
        <position position="606"/>
    </location>
</feature>
<feature type="sequence conflict" description="In Ref. 2; BAA25464." evidence="9" ref="2">
    <original>A</original>
    <variation>T</variation>
    <location>
        <position position="752"/>
    </location>
</feature>
<gene>
    <name type="primary">RASA4</name>
    <name type="synonym">CAPRI</name>
    <name type="synonym">GAPL</name>
    <name type="synonym">KIAA0538</name>
</gene>